<keyword id="KW-0687">Ribonucleoprotein</keyword>
<keyword id="KW-0689">Ribosomal protein</keyword>
<protein>
    <recommendedName>
        <fullName evidence="1">Large ribosomal subunit protein bL34</fullName>
    </recommendedName>
    <alternativeName>
        <fullName evidence="3">50S ribosomal protein L34</fullName>
    </alternativeName>
</protein>
<dbReference type="EMBL" id="CP001172">
    <property type="protein sequence ID" value="ACJ57120.1"/>
    <property type="molecule type" value="Genomic_DNA"/>
</dbReference>
<dbReference type="RefSeq" id="WP_000831329.1">
    <property type="nucleotide sequence ID" value="NZ_CP001172.1"/>
</dbReference>
<dbReference type="SMR" id="B7H343"/>
<dbReference type="GeneID" id="97427695"/>
<dbReference type="HOGENOM" id="CLU_129938_2_0_6"/>
<dbReference type="Proteomes" id="UP000006924">
    <property type="component" value="Chromosome"/>
</dbReference>
<dbReference type="GO" id="GO:1990904">
    <property type="term" value="C:ribonucleoprotein complex"/>
    <property type="evidence" value="ECO:0007669"/>
    <property type="project" value="UniProtKB-KW"/>
</dbReference>
<dbReference type="GO" id="GO:0005840">
    <property type="term" value="C:ribosome"/>
    <property type="evidence" value="ECO:0007669"/>
    <property type="project" value="UniProtKB-KW"/>
</dbReference>
<dbReference type="GO" id="GO:0003735">
    <property type="term" value="F:structural constituent of ribosome"/>
    <property type="evidence" value="ECO:0007669"/>
    <property type="project" value="InterPro"/>
</dbReference>
<dbReference type="GO" id="GO:0006412">
    <property type="term" value="P:translation"/>
    <property type="evidence" value="ECO:0007669"/>
    <property type="project" value="UniProtKB-UniRule"/>
</dbReference>
<dbReference type="FunFam" id="1.10.287.3980:FF:000001">
    <property type="entry name" value="Mitochondrial ribosomal protein L34"/>
    <property type="match status" value="1"/>
</dbReference>
<dbReference type="Gene3D" id="1.10.287.3980">
    <property type="match status" value="1"/>
</dbReference>
<dbReference type="HAMAP" id="MF_00391">
    <property type="entry name" value="Ribosomal_bL34"/>
    <property type="match status" value="1"/>
</dbReference>
<dbReference type="InterPro" id="IPR000271">
    <property type="entry name" value="Ribosomal_bL34"/>
</dbReference>
<dbReference type="InterPro" id="IPR020939">
    <property type="entry name" value="Ribosomal_bL34_CS"/>
</dbReference>
<dbReference type="NCBIfam" id="TIGR01030">
    <property type="entry name" value="rpmH_bact"/>
    <property type="match status" value="1"/>
</dbReference>
<dbReference type="PANTHER" id="PTHR14503:SF4">
    <property type="entry name" value="LARGE RIBOSOMAL SUBUNIT PROTEIN BL34M"/>
    <property type="match status" value="1"/>
</dbReference>
<dbReference type="PANTHER" id="PTHR14503">
    <property type="entry name" value="MITOCHONDRIAL RIBOSOMAL PROTEIN 34 FAMILY MEMBER"/>
    <property type="match status" value="1"/>
</dbReference>
<dbReference type="Pfam" id="PF00468">
    <property type="entry name" value="Ribosomal_L34"/>
    <property type="match status" value="1"/>
</dbReference>
<dbReference type="PROSITE" id="PS00784">
    <property type="entry name" value="RIBOSOMAL_L34"/>
    <property type="match status" value="1"/>
</dbReference>
<comment type="similarity">
    <text evidence="1">Belongs to the bacterial ribosomal protein bL34 family.</text>
</comment>
<name>RL34_ACIB3</name>
<sequence>MKRTFQPSELKRKRVHGFRARMATKAGRQVLARRRAKGRHSLTV</sequence>
<proteinExistence type="inferred from homology"/>
<reference key="1">
    <citation type="journal article" date="2008" name="J. Bacteriol.">
        <title>Comparative genome sequence analysis of multidrug-resistant Acinetobacter baumannii.</title>
        <authorList>
            <person name="Adams M.D."/>
            <person name="Goglin K."/>
            <person name="Molyneaux N."/>
            <person name="Hujer K.M."/>
            <person name="Lavender H."/>
            <person name="Jamison J.J."/>
            <person name="MacDonald I.J."/>
            <person name="Martin K.M."/>
            <person name="Russo T."/>
            <person name="Campagnari A.A."/>
            <person name="Hujer A.M."/>
            <person name="Bonomo R.A."/>
            <person name="Gill S.R."/>
        </authorList>
    </citation>
    <scope>NUCLEOTIDE SEQUENCE [LARGE SCALE GENOMIC DNA]</scope>
    <source>
        <strain>AB307-0294</strain>
    </source>
</reference>
<organism>
    <name type="scientific">Acinetobacter baumannii (strain AB307-0294)</name>
    <dbReference type="NCBI Taxonomy" id="557600"/>
    <lineage>
        <taxon>Bacteria</taxon>
        <taxon>Pseudomonadati</taxon>
        <taxon>Pseudomonadota</taxon>
        <taxon>Gammaproteobacteria</taxon>
        <taxon>Moraxellales</taxon>
        <taxon>Moraxellaceae</taxon>
        <taxon>Acinetobacter</taxon>
        <taxon>Acinetobacter calcoaceticus/baumannii complex</taxon>
    </lineage>
</organism>
<evidence type="ECO:0000255" key="1">
    <source>
        <dbReference type="HAMAP-Rule" id="MF_00391"/>
    </source>
</evidence>
<evidence type="ECO:0000256" key="2">
    <source>
        <dbReference type="SAM" id="MobiDB-lite"/>
    </source>
</evidence>
<evidence type="ECO:0000305" key="3"/>
<accession>B7H343</accession>
<gene>
    <name evidence="1" type="primary">rpmH</name>
    <name type="ordered locus">ABBFA_003531</name>
</gene>
<feature type="chain" id="PRO_1000122880" description="Large ribosomal subunit protein bL34">
    <location>
        <begin position="1"/>
        <end position="44"/>
    </location>
</feature>
<feature type="region of interest" description="Disordered" evidence="2">
    <location>
        <begin position="24"/>
        <end position="44"/>
    </location>
</feature>
<feature type="compositionally biased region" description="Basic residues" evidence="2">
    <location>
        <begin position="31"/>
        <end position="44"/>
    </location>
</feature>